<organismHost>
    <name type="scientific">Pseudomonas aeruginosa</name>
    <dbReference type="NCBI Taxonomy" id="287"/>
</organismHost>
<dbReference type="EMBL" id="M11912">
    <property type="protein sequence ID" value="AAA88381.1"/>
    <property type="molecule type" value="Genomic_DNA"/>
</dbReference>
<dbReference type="EMBL" id="M19377">
    <property type="protein sequence ID" value="AAA88390.1"/>
    <property type="molecule type" value="Genomic_DNA"/>
</dbReference>
<dbReference type="PIR" id="A04270">
    <property type="entry name" value="Z4BP33"/>
</dbReference>
<dbReference type="RefSeq" id="NP_040655.1">
    <property type="nucleotide sequence ID" value="NC_001418.1"/>
</dbReference>
<dbReference type="RefSeq" id="YP_010774592.1">
    <property type="nucleotide sequence ID" value="NC_074763.1"/>
</dbReference>
<dbReference type="SMR" id="P03668"/>
<dbReference type="GeneID" id="1260903"/>
<dbReference type="GeneID" id="80510902"/>
<dbReference type="KEGG" id="vg:1260903"/>
<dbReference type="Proteomes" id="UP000001719">
    <property type="component" value="Genome"/>
</dbReference>
<dbReference type="Proteomes" id="UP000009090">
    <property type="component" value="Genome"/>
</dbReference>
<dbReference type="GO" id="GO:0033644">
    <property type="term" value="C:host cell membrane"/>
    <property type="evidence" value="ECO:0007669"/>
    <property type="project" value="UniProtKB-SubCell"/>
</dbReference>
<dbReference type="GO" id="GO:0016020">
    <property type="term" value="C:membrane"/>
    <property type="evidence" value="ECO:0007669"/>
    <property type="project" value="UniProtKB-KW"/>
</dbReference>
<dbReference type="GO" id="GO:0009306">
    <property type="term" value="P:protein secretion"/>
    <property type="evidence" value="ECO:0007669"/>
    <property type="project" value="InterPro"/>
</dbReference>
<dbReference type="Gene3D" id="3.30.1370.120">
    <property type="match status" value="1"/>
</dbReference>
<dbReference type="Gene3D" id="3.30.1370.130">
    <property type="match status" value="1"/>
</dbReference>
<dbReference type="InterPro" id="IPR001775">
    <property type="entry name" value="GspD/PilQ"/>
</dbReference>
<dbReference type="InterPro" id="IPR005644">
    <property type="entry name" value="NolW-like"/>
</dbReference>
<dbReference type="InterPro" id="IPR038591">
    <property type="entry name" value="NolW-like_sf"/>
</dbReference>
<dbReference type="InterPro" id="IPR004846">
    <property type="entry name" value="T2SS/T3SS_dom"/>
</dbReference>
<dbReference type="InterPro" id="IPR051808">
    <property type="entry name" value="Type_IV_pilus_biogenesis"/>
</dbReference>
<dbReference type="PANTHER" id="PTHR30604:SF1">
    <property type="entry name" value="DNA UTILIZATION PROTEIN HOFQ"/>
    <property type="match status" value="1"/>
</dbReference>
<dbReference type="PANTHER" id="PTHR30604">
    <property type="entry name" value="PROTEIN TRANSPORT PROTEIN HOFQ"/>
    <property type="match status" value="1"/>
</dbReference>
<dbReference type="Pfam" id="PF00263">
    <property type="entry name" value="Secretin"/>
    <property type="match status" value="1"/>
</dbReference>
<dbReference type="Pfam" id="PF03958">
    <property type="entry name" value="Secretin_N"/>
    <property type="match status" value="1"/>
</dbReference>
<dbReference type="PRINTS" id="PR00811">
    <property type="entry name" value="BCTERIALGSPD"/>
</dbReference>
<feature type="signal peptide" evidence="1">
    <location>
        <begin position="1"/>
        <end position="20"/>
    </location>
</feature>
<feature type="chain" id="PRO_0000098215" description="Putative assembly protein ORF430">
    <location>
        <begin position="21"/>
        <end position="430"/>
    </location>
</feature>
<feature type="transmembrane region" description="Helical" evidence="1">
    <location>
        <begin position="226"/>
        <end position="245"/>
    </location>
</feature>
<organism>
    <name type="scientific">Pseudomonas phage Pf3</name>
    <name type="common">Bacteriophage Pf3</name>
    <dbReference type="NCBI Taxonomy" id="10872"/>
    <lineage>
        <taxon>Viruses</taxon>
        <taxon>Monodnaviria</taxon>
        <taxon>Loebvirae</taxon>
        <taxon>Hofneiviricota</taxon>
        <taxon>Faserviricetes</taxon>
        <taxon>Tubulavirales</taxon>
        <taxon>Inoviridae</taxon>
        <taxon>Tertilicivirus</taxon>
        <taxon>Tertilicivirus Pf3</taxon>
    </lineage>
</organism>
<evidence type="ECO:0000255" key="1"/>
<evidence type="ECO:0000305" key="2"/>
<protein>
    <recommendedName>
        <fullName>Putative assembly protein ORF430</fullName>
        <shortName>ORF430</shortName>
    </recommendedName>
</protein>
<reference key="1">
    <citation type="journal article" date="1985" name="J. Virol.">
        <title>Nucleotide sequence of the genome of Pf3, an IncP-1 plasmid-specific filamentous bacteriophage of Pseudomonas aeruginosa.</title>
        <authorList>
            <person name="Luiten R.G.M."/>
            <person name="Putterman D.G."/>
            <person name="Schoenmakers J.G.G."/>
            <person name="Konings R.N.H."/>
            <person name="Day L.A."/>
        </authorList>
    </citation>
    <scope>NUCLEOTIDE SEQUENCE [GENOMIC DNA]</scope>
    <source>
        <strain>New York</strain>
        <strain>Nijmegen</strain>
    </source>
</reference>
<name>VG430_BPPF3</name>
<accession>P03668</accession>
<keyword id="KW-1043">Host membrane</keyword>
<keyword id="KW-0472">Membrane</keyword>
<keyword id="KW-1185">Reference proteome</keyword>
<keyword id="KW-0732">Signal</keyword>
<keyword id="KW-0812">Transmembrane</keyword>
<keyword id="KW-1133">Transmembrane helix</keyword>
<proteinExistence type="inferred from homology"/>
<comment type="function">
    <text>May play a role in phage assembly.</text>
</comment>
<comment type="subcellular location">
    <subcellularLocation>
        <location evidence="2">Host membrane</location>
        <topology evidence="2">Single-pass type I membrane protein</topology>
    </subcellularLocation>
</comment>
<sequence length="430" mass="46490">MIRSIIALMLSFALVPFAFASDRLTVKHHEIDIRVAIPLVADFCGRSVVLGPSIQGVVSLDFDDVPCSQAFDLLLESNHLLSSMVGDVLVITAMDQVLNSERKADDLRTFRRDLFNANDIERRVINIVHASASEVVSLFKESFMSLDAPGMSMTVDERTNSVFAALPSSFFPALESVIQAIDVPVRQVAIEANVVEASVDWSKRLGLNWGGALSLGNWSAVTAGDLSVAAGSSIGFGFLSNTLSLDGLFTAMENEGNGRVVSRPTLLTLDRQSASVLRGTELPYQQSAGDGATSVAFKHAALSLEVKPVISPDNSIVIEVLVSRDSPNFSNAIDGVPPIDTNRLVTTIRVPHGQTVVLGGVYSTINQQGSSRVSGISRIPGIGRLFKKKEHVTEQYELLIFLTPRILGLEVEPEKQSLVFDESFFLGDLF</sequence>